<reference evidence="15" key="1">
    <citation type="journal article" date="2002" name="Insect Biochem. Mol. Biol.">
        <title>Drosophila melanogaster ferritin: cDNA encoding a light chain homologue, temporal and tissue specific expression of both subunit types.</title>
        <authorList>
            <person name="Georgieva T."/>
            <person name="Dunkov B.C."/>
            <person name="Dimov S."/>
            <person name="Ralchev K."/>
            <person name="Law J.H."/>
        </authorList>
    </citation>
    <scope>NUCLEOTIDE SEQUENCE [MRNA]</scope>
    <scope>TISSUE SPECIFICITY</scope>
    <scope>DEVELOPMENTAL STAGE</scope>
    <scope>INDUCTION</scope>
</reference>
<reference evidence="16" key="2">
    <citation type="journal article" date="1999" name="DNA Cell Biol.">
        <title>Organization of the ferritin genes in Drosophila melanogaster.</title>
        <authorList>
            <person name="Dunkov B.C."/>
            <person name="Georgieva T."/>
        </authorList>
    </citation>
    <scope>NUCLEOTIDE SEQUENCE [GENOMIC DNA]</scope>
</reference>
<reference evidence="19" key="3">
    <citation type="journal article" date="2000" name="Science">
        <title>The genome sequence of Drosophila melanogaster.</title>
        <authorList>
            <person name="Adams M.D."/>
            <person name="Celniker S.E."/>
            <person name="Holt R.A."/>
            <person name="Evans C.A."/>
            <person name="Gocayne J.D."/>
            <person name="Amanatides P.G."/>
            <person name="Scherer S.E."/>
            <person name="Li P.W."/>
            <person name="Hoskins R.A."/>
            <person name="Galle R.F."/>
            <person name="George R.A."/>
            <person name="Lewis S.E."/>
            <person name="Richards S."/>
            <person name="Ashburner M."/>
            <person name="Henderson S.N."/>
            <person name="Sutton G.G."/>
            <person name="Wortman J.R."/>
            <person name="Yandell M.D."/>
            <person name="Zhang Q."/>
            <person name="Chen L.X."/>
            <person name="Brandon R.C."/>
            <person name="Rogers Y.-H.C."/>
            <person name="Blazej R.G."/>
            <person name="Champe M."/>
            <person name="Pfeiffer B.D."/>
            <person name="Wan K.H."/>
            <person name="Doyle C."/>
            <person name="Baxter E.G."/>
            <person name="Helt G."/>
            <person name="Nelson C.R."/>
            <person name="Miklos G.L.G."/>
            <person name="Abril J.F."/>
            <person name="Agbayani A."/>
            <person name="An H.-J."/>
            <person name="Andrews-Pfannkoch C."/>
            <person name="Baldwin D."/>
            <person name="Ballew R.M."/>
            <person name="Basu A."/>
            <person name="Baxendale J."/>
            <person name="Bayraktaroglu L."/>
            <person name="Beasley E.M."/>
            <person name="Beeson K.Y."/>
            <person name="Benos P.V."/>
            <person name="Berman B.P."/>
            <person name="Bhandari D."/>
            <person name="Bolshakov S."/>
            <person name="Borkova D."/>
            <person name="Botchan M.R."/>
            <person name="Bouck J."/>
            <person name="Brokstein P."/>
            <person name="Brottier P."/>
            <person name="Burtis K.C."/>
            <person name="Busam D.A."/>
            <person name="Butler H."/>
            <person name="Cadieu E."/>
            <person name="Center A."/>
            <person name="Chandra I."/>
            <person name="Cherry J.M."/>
            <person name="Cawley S."/>
            <person name="Dahlke C."/>
            <person name="Davenport L.B."/>
            <person name="Davies P."/>
            <person name="de Pablos B."/>
            <person name="Delcher A."/>
            <person name="Deng Z."/>
            <person name="Mays A.D."/>
            <person name="Dew I."/>
            <person name="Dietz S.M."/>
            <person name="Dodson K."/>
            <person name="Doup L.E."/>
            <person name="Downes M."/>
            <person name="Dugan-Rocha S."/>
            <person name="Dunkov B.C."/>
            <person name="Dunn P."/>
            <person name="Durbin K.J."/>
            <person name="Evangelista C.C."/>
            <person name="Ferraz C."/>
            <person name="Ferriera S."/>
            <person name="Fleischmann W."/>
            <person name="Fosler C."/>
            <person name="Gabrielian A.E."/>
            <person name="Garg N.S."/>
            <person name="Gelbart W.M."/>
            <person name="Glasser K."/>
            <person name="Glodek A."/>
            <person name="Gong F."/>
            <person name="Gorrell J.H."/>
            <person name="Gu Z."/>
            <person name="Guan P."/>
            <person name="Harris M."/>
            <person name="Harris N.L."/>
            <person name="Harvey D.A."/>
            <person name="Heiman T.J."/>
            <person name="Hernandez J.R."/>
            <person name="Houck J."/>
            <person name="Hostin D."/>
            <person name="Houston K.A."/>
            <person name="Howland T.J."/>
            <person name="Wei M.-H."/>
            <person name="Ibegwam C."/>
            <person name="Jalali M."/>
            <person name="Kalush F."/>
            <person name="Karpen G.H."/>
            <person name="Ke Z."/>
            <person name="Kennison J.A."/>
            <person name="Ketchum K.A."/>
            <person name="Kimmel B.E."/>
            <person name="Kodira C.D."/>
            <person name="Kraft C.L."/>
            <person name="Kravitz S."/>
            <person name="Kulp D."/>
            <person name="Lai Z."/>
            <person name="Lasko P."/>
            <person name="Lei Y."/>
            <person name="Levitsky A.A."/>
            <person name="Li J.H."/>
            <person name="Li Z."/>
            <person name="Liang Y."/>
            <person name="Lin X."/>
            <person name="Liu X."/>
            <person name="Mattei B."/>
            <person name="McIntosh T.C."/>
            <person name="McLeod M.P."/>
            <person name="McPherson D."/>
            <person name="Merkulov G."/>
            <person name="Milshina N.V."/>
            <person name="Mobarry C."/>
            <person name="Morris J."/>
            <person name="Moshrefi A."/>
            <person name="Mount S.M."/>
            <person name="Moy M."/>
            <person name="Murphy B."/>
            <person name="Murphy L."/>
            <person name="Muzny D.M."/>
            <person name="Nelson D.L."/>
            <person name="Nelson D.R."/>
            <person name="Nelson K.A."/>
            <person name="Nixon K."/>
            <person name="Nusskern D.R."/>
            <person name="Pacleb J.M."/>
            <person name="Palazzolo M."/>
            <person name="Pittman G.S."/>
            <person name="Pan S."/>
            <person name="Pollard J."/>
            <person name="Puri V."/>
            <person name="Reese M.G."/>
            <person name="Reinert K."/>
            <person name="Remington K."/>
            <person name="Saunders R.D.C."/>
            <person name="Scheeler F."/>
            <person name="Shen H."/>
            <person name="Shue B.C."/>
            <person name="Siden-Kiamos I."/>
            <person name="Simpson M."/>
            <person name="Skupski M.P."/>
            <person name="Smith T.J."/>
            <person name="Spier E."/>
            <person name="Spradling A.C."/>
            <person name="Stapleton M."/>
            <person name="Strong R."/>
            <person name="Sun E."/>
            <person name="Svirskas R."/>
            <person name="Tector C."/>
            <person name="Turner R."/>
            <person name="Venter E."/>
            <person name="Wang A.H."/>
            <person name="Wang X."/>
            <person name="Wang Z.-Y."/>
            <person name="Wassarman D.A."/>
            <person name="Weinstock G.M."/>
            <person name="Weissenbach J."/>
            <person name="Williams S.M."/>
            <person name="Woodage T."/>
            <person name="Worley K.C."/>
            <person name="Wu D."/>
            <person name="Yang S."/>
            <person name="Yao Q.A."/>
            <person name="Ye J."/>
            <person name="Yeh R.-F."/>
            <person name="Zaveri J.S."/>
            <person name="Zhan M."/>
            <person name="Zhang G."/>
            <person name="Zhao Q."/>
            <person name="Zheng L."/>
            <person name="Zheng X.H."/>
            <person name="Zhong F.N."/>
            <person name="Zhong W."/>
            <person name="Zhou X."/>
            <person name="Zhu S.C."/>
            <person name="Zhu X."/>
            <person name="Smith H.O."/>
            <person name="Gibbs R.A."/>
            <person name="Myers E.W."/>
            <person name="Rubin G.M."/>
            <person name="Venter J.C."/>
        </authorList>
    </citation>
    <scope>NUCLEOTIDE SEQUENCE [LARGE SCALE GENOMIC DNA]</scope>
    <source>
        <strain evidence="19">Berkeley</strain>
    </source>
</reference>
<reference evidence="19" key="4">
    <citation type="journal article" date="2002" name="Genome Biol.">
        <title>Annotation of the Drosophila melanogaster euchromatic genome: a systematic review.</title>
        <authorList>
            <person name="Misra S."/>
            <person name="Crosby M.A."/>
            <person name="Mungall C.J."/>
            <person name="Matthews B.B."/>
            <person name="Campbell K.S."/>
            <person name="Hradecky P."/>
            <person name="Huang Y."/>
            <person name="Kaminker J.S."/>
            <person name="Millburn G.H."/>
            <person name="Prochnik S.E."/>
            <person name="Smith C.D."/>
            <person name="Tupy J.L."/>
            <person name="Whitfield E.J."/>
            <person name="Bayraktaroglu L."/>
            <person name="Berman B.P."/>
            <person name="Bettencourt B.R."/>
            <person name="Celniker S.E."/>
            <person name="de Grey A.D.N.J."/>
            <person name="Drysdale R.A."/>
            <person name="Harris N.L."/>
            <person name="Richter J."/>
            <person name="Russo S."/>
            <person name="Schroeder A.J."/>
            <person name="Shu S.Q."/>
            <person name="Stapleton M."/>
            <person name="Yamada C."/>
            <person name="Ashburner M."/>
            <person name="Gelbart W.M."/>
            <person name="Rubin G.M."/>
            <person name="Lewis S.E."/>
        </authorList>
    </citation>
    <scope>GENOME REANNOTATION</scope>
    <source>
        <strain evidence="19">Berkeley</strain>
    </source>
</reference>
<reference evidence="17" key="5">
    <citation type="journal article" date="2002" name="Genome Biol.">
        <title>A Drosophila full-length cDNA resource.</title>
        <authorList>
            <person name="Stapleton M."/>
            <person name="Carlson J.W."/>
            <person name="Brokstein P."/>
            <person name="Yu C."/>
            <person name="Champe M."/>
            <person name="George R.A."/>
            <person name="Guarin H."/>
            <person name="Kronmiller B."/>
            <person name="Pacleb J.M."/>
            <person name="Park S."/>
            <person name="Wan K.H."/>
            <person name="Rubin G.M."/>
            <person name="Celniker S.E."/>
        </authorList>
    </citation>
    <scope>NUCLEOTIDE SEQUENCE [LARGE SCALE MRNA]</scope>
    <source>
        <strain evidence="17">Berkeley</strain>
        <tissue evidence="17">Testis</tissue>
    </source>
</reference>
<reference evidence="14" key="6">
    <citation type="journal article" date="1997" name="Eur. J. Biochem.">
        <title>Isolation and properties of Drosophila melanogaster ferritin--molecular cloning of a cDNA that encodes one subunit, and localization of the gene on the third chromosome.</title>
        <authorList>
            <person name="Charlesworth A."/>
            <person name="Georgieva T."/>
            <person name="Gospodov I."/>
            <person name="Law J.H."/>
            <person name="Dunkov B.C."/>
            <person name="Ralcheva N."/>
            <person name="Barillas-Mury C."/>
            <person name="Ralchev K."/>
            <person name="Kafatos F.C."/>
        </authorList>
    </citation>
    <scope>PROTEIN SEQUENCE OF 20-29</scope>
    <scope>SUBUNIT</scope>
    <source>
        <strain evidence="13">Canton-S</strain>
    </source>
</reference>
<reference evidence="14" key="7">
    <citation type="journal article" date="2007" name="Genetics">
        <title>Homeostatic mechanisms for iron storage revealed by genetic manipulations and live imaging of Drosophila ferritin.</title>
        <authorList>
            <person name="Missirlis F."/>
            <person name="Kosmidis S."/>
            <person name="Brody T."/>
            <person name="Mavrakis M."/>
            <person name="Holmberg S."/>
            <person name="Odenwald W.F."/>
            <person name="Skoulakis E.M."/>
            <person name="Rouault T.A."/>
        </authorList>
    </citation>
    <scope>FUNCTION</scope>
    <scope>SUBCELLULAR LOCATION</scope>
    <scope>DEVELOPMENTAL STAGE</scope>
    <scope>INDUCTION</scope>
    <scope>DISRUPTION PHENOTYPE</scope>
</reference>
<reference evidence="14" key="8">
    <citation type="journal article" date="2012" name="Metallomics">
        <title>Genes for iron metabolism influence circadian rhythms in Drosophila melanogaster.</title>
        <authorList>
            <person name="Mandilaras K."/>
            <person name="Missirlis F."/>
        </authorList>
    </citation>
    <scope>FUNCTION</scope>
    <scope>DISRUPTION PHENOTYPE</scope>
</reference>
<reference evidence="14" key="9">
    <citation type="journal article" date="2013" name="FASEB J.">
        <title>Ferritin is the key to dietary iron absorption and tissue iron detoxification in Drosophila melanogaster.</title>
        <authorList>
            <person name="Tang X."/>
            <person name="Zhou B."/>
        </authorList>
    </citation>
    <scope>FUNCTION</scope>
    <scope>TISSUE SPECIFICITY</scope>
    <scope>DEVELOPMENTAL STAGE</scope>
    <scope>DISRUPTION PHENOTYPE</scope>
</reference>
<reference evidence="14" key="10">
    <citation type="journal article" date="2013" name="Metallomics">
        <title>Biophysical and genetic analysis of iron partitioning and ferritin function in Drosophila melanogaster.</title>
        <authorList>
            <person name="Gutierrez L."/>
            <person name="Zubow K."/>
            <person name="Nield J."/>
            <person name="Gambis A."/>
            <person name="Mollereau B."/>
            <person name="Lazaro F.J."/>
            <person name="Missirlis F."/>
        </authorList>
    </citation>
    <scope>FUNCTION</scope>
    <scope>SUBUNIT</scope>
</reference>
<reference evidence="14" key="11">
    <citation type="journal article" date="2015" name="PLoS ONE">
        <title>Ferritin Is Required in Multiple Tissues during Drosophila melanogaster Development.</title>
        <authorList>
            <person name="Gonzalez-Morales N."/>
            <person name="Mendoza-Ortiz M.A."/>
            <person name="Blowes L.M."/>
            <person name="Missirlis F."/>
            <person name="Riesgo-Escovar J.R."/>
        </authorList>
    </citation>
    <scope>FUNCTION</scope>
    <scope>SUBCELLULAR LOCATION</scope>
    <scope>INDUCTION</scope>
    <scope>DISRUPTION PHENOTYPE</scope>
</reference>
<reference evidence="14" key="12">
    <citation type="journal article" date="2019" name="PLoS Genet.">
        <title>Ferritin heavy chain protects the developing wing from reactive oxygen species and ferroptosis.</title>
        <authorList>
            <person name="Mumbauer S."/>
            <person name="Pascual J."/>
            <person name="Kolotuev I."/>
            <person name="Hamaratoglu F."/>
        </authorList>
    </citation>
    <scope>DISRUPTION PHENOTYPE</scope>
</reference>
<reference evidence="14" key="13">
    <citation type="journal article" date="2020" name="PLoS Genet.">
        <authorList>
            <person name="Mumbauer S."/>
            <person name="Pascual J."/>
            <person name="Kolotuev I."/>
            <person name="Hamaratoglu F."/>
        </authorList>
    </citation>
    <scope>ERRATUM OF PUBMED:31568497</scope>
</reference>
<dbReference type="EMBL" id="AF145124">
    <property type="protein sequence ID" value="AAF07876.1"/>
    <property type="molecule type" value="mRNA"/>
</dbReference>
<dbReference type="EMBL" id="AH008382">
    <property type="protein sequence ID" value="AAF07879.1"/>
    <property type="molecule type" value="Genomic_DNA"/>
</dbReference>
<dbReference type="EMBL" id="AE014297">
    <property type="protein sequence ID" value="AAF57038.1"/>
    <property type="molecule type" value="Genomic_DNA"/>
</dbReference>
<dbReference type="EMBL" id="AE014297">
    <property type="protein sequence ID" value="AAN14228.1"/>
    <property type="molecule type" value="Genomic_DNA"/>
</dbReference>
<dbReference type="EMBL" id="AE014297">
    <property type="protein sequence ID" value="AAN14229.1"/>
    <property type="molecule type" value="Genomic_DNA"/>
</dbReference>
<dbReference type="EMBL" id="AE014297">
    <property type="protein sequence ID" value="AGB96484.1"/>
    <property type="molecule type" value="Genomic_DNA"/>
</dbReference>
<dbReference type="EMBL" id="AY070805">
    <property type="protein sequence ID" value="AAL48427.1"/>
    <property type="molecule type" value="mRNA"/>
</dbReference>
<dbReference type="RefSeq" id="NP_001263105.1">
    <property type="nucleotide sequence ID" value="NM_001276176.1"/>
</dbReference>
<dbReference type="RefSeq" id="NP_524802.2">
    <property type="nucleotide sequence ID" value="NM_080063.4"/>
</dbReference>
<dbReference type="RefSeq" id="NP_733362.1">
    <property type="nucleotide sequence ID" value="NM_170483.1"/>
</dbReference>
<dbReference type="RefSeq" id="NP_733363.1">
    <property type="nucleotide sequence ID" value="NM_170484.1"/>
</dbReference>
<dbReference type="SMR" id="Q9VA83"/>
<dbReference type="IntAct" id="Q9VA83">
    <property type="interactions" value="223"/>
</dbReference>
<dbReference type="DNASU" id="44965"/>
<dbReference type="EnsemblMetazoa" id="FBtr0085622">
    <property type="protein sequence ID" value="FBpp0084986"/>
    <property type="gene ID" value="FBgn0015221"/>
</dbReference>
<dbReference type="EnsemblMetazoa" id="FBtr0085623">
    <property type="protein sequence ID" value="FBpp0084987"/>
    <property type="gene ID" value="FBgn0015221"/>
</dbReference>
<dbReference type="EnsemblMetazoa" id="FBtr0085624">
    <property type="protein sequence ID" value="FBpp0084988"/>
    <property type="gene ID" value="FBgn0015221"/>
</dbReference>
<dbReference type="EnsemblMetazoa" id="FBtr0332168">
    <property type="protein sequence ID" value="FBpp0304477"/>
    <property type="gene ID" value="FBgn0015221"/>
</dbReference>
<dbReference type="GeneID" id="44965"/>
<dbReference type="KEGG" id="dme:Dmel_CG1469"/>
<dbReference type="UCSC" id="CG1469-RA">
    <property type="organism name" value="d. melanogaster"/>
</dbReference>
<dbReference type="AGR" id="FB:FBgn0015221"/>
<dbReference type="CTD" id="44965"/>
<dbReference type="FlyBase" id="FBgn0015221">
    <property type="gene designation" value="Fer2LCH"/>
</dbReference>
<dbReference type="VEuPathDB" id="VectorBase:FBgn0015221"/>
<dbReference type="OrthoDB" id="6363126at2759"/>
<dbReference type="BioGRID-ORCS" id="44965">
    <property type="hits" value="0 hits in 1 CRISPR screen"/>
</dbReference>
<dbReference type="GenomeRNAi" id="44965"/>
<dbReference type="PRO" id="PR:Q9VA83"/>
<dbReference type="Proteomes" id="UP000000803">
    <property type="component" value="Chromosome 3R"/>
</dbReference>
<dbReference type="Bgee" id="FBgn0015221">
    <property type="expression patterns" value="Expressed in copper cell (Drosophila) in digestive tract and 302 other cell types or tissues"/>
</dbReference>
<dbReference type="ExpressionAtlas" id="Q9VA83">
    <property type="expression patterns" value="baseline and differential"/>
</dbReference>
<dbReference type="GO" id="GO:0005737">
    <property type="term" value="C:cytoplasm"/>
    <property type="evidence" value="ECO:0000318"/>
    <property type="project" value="GO_Central"/>
</dbReference>
<dbReference type="GO" id="GO:0012505">
    <property type="term" value="C:endomembrane system"/>
    <property type="evidence" value="ECO:0007005"/>
    <property type="project" value="FlyBase"/>
</dbReference>
<dbReference type="GO" id="GO:0005576">
    <property type="term" value="C:extracellular region"/>
    <property type="evidence" value="ECO:0007005"/>
    <property type="project" value="FlyBase"/>
</dbReference>
<dbReference type="GO" id="GO:0070288">
    <property type="term" value="C:ferritin complex"/>
    <property type="evidence" value="ECO:0000314"/>
    <property type="project" value="FlyBase"/>
</dbReference>
<dbReference type="GO" id="GO:0005794">
    <property type="term" value="C:Golgi apparatus"/>
    <property type="evidence" value="ECO:0000314"/>
    <property type="project" value="FlyBase"/>
</dbReference>
<dbReference type="GO" id="GO:0008199">
    <property type="term" value="F:ferric iron binding"/>
    <property type="evidence" value="ECO:0000318"/>
    <property type="project" value="GO_Central"/>
</dbReference>
<dbReference type="GO" id="GO:0008198">
    <property type="term" value="F:ferrous iron binding"/>
    <property type="evidence" value="ECO:0000314"/>
    <property type="project" value="FlyBase"/>
</dbReference>
<dbReference type="GO" id="GO:0004322">
    <property type="term" value="F:ferroxidase activity"/>
    <property type="evidence" value="ECO:0007669"/>
    <property type="project" value="UniProtKB-EC"/>
</dbReference>
<dbReference type="GO" id="GO:1990461">
    <property type="term" value="P:detoxification of iron ion"/>
    <property type="evidence" value="ECO:0000315"/>
    <property type="project" value="FlyBase"/>
</dbReference>
<dbReference type="GO" id="GO:0006879">
    <property type="term" value="P:intracellular iron ion homeostasis"/>
    <property type="evidence" value="ECO:0000314"/>
    <property type="project" value="FlyBase"/>
</dbReference>
<dbReference type="GO" id="GO:0098711">
    <property type="term" value="P:iron ion import across plasma membrane"/>
    <property type="evidence" value="ECO:0000315"/>
    <property type="project" value="FlyBase"/>
</dbReference>
<dbReference type="GO" id="GO:0009620">
    <property type="term" value="P:response to fungus"/>
    <property type="evidence" value="ECO:0007007"/>
    <property type="project" value="FlyBase"/>
</dbReference>
<dbReference type="CDD" id="cd01056">
    <property type="entry name" value="Euk_Ferritin"/>
    <property type="match status" value="1"/>
</dbReference>
<dbReference type="FunFam" id="1.20.1260.10:FF:000020">
    <property type="entry name" value="Ferritin"/>
    <property type="match status" value="1"/>
</dbReference>
<dbReference type="Gene3D" id="1.20.1260.10">
    <property type="match status" value="1"/>
</dbReference>
<dbReference type="InterPro" id="IPR001519">
    <property type="entry name" value="Ferritin"/>
</dbReference>
<dbReference type="InterPro" id="IPR012347">
    <property type="entry name" value="Ferritin-like"/>
</dbReference>
<dbReference type="InterPro" id="IPR009040">
    <property type="entry name" value="Ferritin-like_diiron"/>
</dbReference>
<dbReference type="InterPro" id="IPR009078">
    <property type="entry name" value="Ferritin-like_SF"/>
</dbReference>
<dbReference type="InterPro" id="IPR008331">
    <property type="entry name" value="Ferritin_DPS_dom"/>
</dbReference>
<dbReference type="PANTHER" id="PTHR11431">
    <property type="entry name" value="FERRITIN"/>
    <property type="match status" value="1"/>
</dbReference>
<dbReference type="PANTHER" id="PTHR11431:SF51">
    <property type="entry name" value="FERRITIN"/>
    <property type="match status" value="1"/>
</dbReference>
<dbReference type="Pfam" id="PF00210">
    <property type="entry name" value="Ferritin"/>
    <property type="match status" value="1"/>
</dbReference>
<dbReference type="SUPFAM" id="SSF47240">
    <property type="entry name" value="Ferritin-like"/>
    <property type="match status" value="1"/>
</dbReference>
<dbReference type="PROSITE" id="PS50905">
    <property type="entry name" value="FERRITIN_LIKE"/>
    <property type="match status" value="1"/>
</dbReference>
<organism evidence="19">
    <name type="scientific">Drosophila melanogaster</name>
    <name type="common">Fruit fly</name>
    <dbReference type="NCBI Taxonomy" id="7227"/>
    <lineage>
        <taxon>Eukaryota</taxon>
        <taxon>Metazoa</taxon>
        <taxon>Ecdysozoa</taxon>
        <taxon>Arthropoda</taxon>
        <taxon>Hexapoda</taxon>
        <taxon>Insecta</taxon>
        <taxon>Pterygota</taxon>
        <taxon>Neoptera</taxon>
        <taxon>Endopterygota</taxon>
        <taxon>Diptera</taxon>
        <taxon>Brachycera</taxon>
        <taxon>Muscomorpha</taxon>
        <taxon>Ephydroidea</taxon>
        <taxon>Drosophilidae</taxon>
        <taxon>Drosophila</taxon>
        <taxon>Sophophora</taxon>
    </lineage>
</organism>
<comment type="function">
    <text evidence="3 5 6 7 8 9">Stores iron in a soluble, non-toxic, readily available form (By similarity) (PubMed:23771129). Important for iron homeostasis (By similarity) (PubMed:23064556, PubMed:23771129). Iron is taken up in the ferrous form and deposited as ferric hydroxides after oxidation (By similarity) (PubMed:17603097, PubMed:23771129). Ferritin is composed of a heavy (H) chain which is responsible for the oxidation and uptake of ferrous iron, and a light (L) chain which facilitates the nucleation of the ferrihydrite iron core (PubMed:23771129). Required for dietary iron absorption in the midgut (PubMed:23064556). Involved in tissue iron detoxification by exporting excess iron (PubMed:23064556). Plays a role in the maintenance of circadian rhythms (PubMed:22885802). Required for embryo and larval development (PubMed:26192321).</text>
</comment>
<comment type="subunit">
    <text evidence="8 11">Oligomer of 12 light (L) chains and 12 heavy (H) chains; L and H chains are disulfide-linked (PubMed:9266686). The functional molecule forms a roughly spherical shell with a diameter of 12 nm and contains a central cavity into which the insoluble ferric iron core is deposited (PubMed:23771129).</text>
</comment>
<comment type="subcellular location">
    <subcellularLocation>
        <location evidence="5">Golgi apparatus</location>
    </subcellularLocation>
    <subcellularLocation>
        <location evidence="9">Secreted</location>
    </subcellularLocation>
</comment>
<comment type="tissue specificity">
    <text evidence="4 7">Expressed in hemolymph, gut, ovaries and to a lesser extent in testes (at protein level) (PubMed:11804801). Expressed in the head (at protein level) (PubMed:23064556).</text>
</comment>
<comment type="developmental stage">
    <text evidence="4 5 7">Expressed in the gut and hemolymph of second instar larvae, wandering larvae and early pupae (at protein level) (PubMed:11804801, PubMed:23064556). Expressed in the middle part of the gut in third instar larvae (PubMed:17603097). Expressed in embryos, third instar larvae, light pupae, dark pupae and adults (PubMed:11804801, PubMed:17603097). During embryogenesis, expressed in blastoderm, in mesoderm cells during germ-band elongation that give rise to fat bodies and amnioserosa and in cells that give rise macrophages in the anterior head region (PubMed:17603097). During germ-band retraction and dorsal closure, expressed in amnioserosa (PubMed:17603097). At late stages of embryogenesis, expressed in cells in the developing midgut (PubMed:17603097).</text>
</comment>
<comment type="induction">
    <text evidence="4 5 9">Up-regulated by iron-supplemented diet in the anterior part of the gut of third instar larvae and adults (at protein level).</text>
</comment>
<comment type="disruption phenotype">
    <text evidence="5 6 7 9 10">Embryonic lethal with some embryos displaying cuticle and nervous system defects (PubMed:17603097, PubMed:26192321). RNAi-mediated knockdown is lethal at the late pupal stage (PubMed:23064556). Also the levels of ferritin heavy chain Fer1HCH are reduced (PubMed:23064556). RNAi-mediated knockdown in the midgut causes growth delays and reduces survival rate only in the presence of the iron chelator BPS. Also, results in gut iron accumulation and systemic iron deficiency, reduces Mvl transcription and aconitase activity (PubMed:23064556). RNAi-mediated knockdown in the eye does not affect eye morphology; however, the eyes develop degenerative vacuoles (PubMed:23064556). RNAi-mediated knockdown in the wing pouch results in slightly smaller wings with no defect in cell proliferation and cell death patterns (PubMed:26192321, PubMed:31568497). RNAi-mediated knockdown in cry+ neurons (LNds and s-LNvs) disrupts circadian oscillations of PER and TIM leading to the disruption of circadian activity in the absence of external cues (PubMed:22885802). RNAi-mediated knockdown in the nervous system, embryonic epidermis and imaginal disks, endoderm, mesoderm, fat body or somatic muscles causes no defect (PubMed:23064556).</text>
</comment>
<comment type="similarity">
    <text evidence="3">Belongs to the ferritin family.</text>
</comment>
<name>FRIL_DROME</name>
<sequence length="227" mass="25242">MKFFVALALFACLGSLALAKDDEYCQNTVITACSTSAFSANSICNARFAGIDHIEPEIQSYINANLAKSYDYLLLATHFNSYQKNRPGFQKLYQGLSDRSFEDSIALIKQVTRRGGIVDFNTRHESSGSVSTKRGTLEVDELHSLALALDTEKQLATGATHVHSRATHATDAERDPELAHYFEENFLGKQAESVRKLSGYANDLAKLMKVPDPSLSVYLFDEYLQKQ</sequence>
<protein>
    <recommendedName>
        <fullName evidence="12">Ferritin light chain</fullName>
    </recommendedName>
</protein>
<feature type="signal peptide" evidence="11">
    <location>
        <begin position="1"/>
        <end position="19"/>
    </location>
</feature>
<feature type="chain" id="PRO_5015100066" description="Ferritin light chain">
    <location>
        <begin position="20"/>
        <end position="227"/>
    </location>
</feature>
<feature type="domain" description="Ferritin-like diiron" evidence="2">
    <location>
        <begin position="48"/>
        <end position="208"/>
    </location>
</feature>
<feature type="disulfide bond" evidence="1">
    <location>
        <begin position="25"/>
        <end position="44"/>
    </location>
</feature>
<feature type="disulfide bond" description="Interchain (with C-23 in heavy chain)" evidence="1">
    <location>
        <position position="33"/>
    </location>
</feature>
<feature type="sequence conflict" description="In Ref. 6; AA sequence." evidence="14" ref="6">
    <original>K</original>
    <variation>L</variation>
    <location>
        <position position="20"/>
    </location>
</feature>
<feature type="sequence conflict" description="In Ref. 2; AAF07879." evidence="14" ref="2">
    <original>A</original>
    <variation>G</variation>
    <location>
        <position position="40"/>
    </location>
</feature>
<feature type="sequence conflict" description="In Ref. 2; AAF07879." evidence="14" ref="2">
    <original>G</original>
    <variation>V</variation>
    <location>
        <position position="135"/>
    </location>
</feature>
<feature type="sequence conflict" description="In Ref. 1; AAF07876." evidence="14" ref="1">
    <original>L</original>
    <variation>F</variation>
    <location>
        <position position="204"/>
    </location>
</feature>
<gene>
    <name evidence="12 18" type="primary">Fer2LCH</name>
    <name evidence="12" type="synonym">LCH</name>
    <name evidence="18" type="ORF">CG1469</name>
</gene>
<keyword id="KW-0903">Direct protein sequencing</keyword>
<keyword id="KW-1015">Disulfide bond</keyword>
<keyword id="KW-0333">Golgi apparatus</keyword>
<keyword id="KW-0408">Iron</keyword>
<keyword id="KW-0409">Iron storage</keyword>
<keyword id="KW-0479">Metal-binding</keyword>
<keyword id="KW-1185">Reference proteome</keyword>
<keyword id="KW-0964">Secreted</keyword>
<keyword id="KW-0732">Signal</keyword>
<accession>Q9VA83</accession>
<accession>Q9U4U2</accession>
<accession>Q9U7A3</accession>
<evidence type="ECO:0000250" key="1">
    <source>
        <dbReference type="UniProtKB" id="A0A7E5WUT2"/>
    </source>
</evidence>
<evidence type="ECO:0000255" key="2">
    <source>
        <dbReference type="PROSITE-ProRule" id="PRU00085"/>
    </source>
</evidence>
<evidence type="ECO:0000255" key="3">
    <source>
        <dbReference type="RuleBase" id="RU361145"/>
    </source>
</evidence>
<evidence type="ECO:0000269" key="4">
    <source>
    </source>
</evidence>
<evidence type="ECO:0000269" key="5">
    <source>
    </source>
</evidence>
<evidence type="ECO:0000269" key="6">
    <source>
    </source>
</evidence>
<evidence type="ECO:0000269" key="7">
    <source>
    </source>
</evidence>
<evidence type="ECO:0000269" key="8">
    <source>
    </source>
</evidence>
<evidence type="ECO:0000269" key="9">
    <source>
    </source>
</evidence>
<evidence type="ECO:0000269" key="10">
    <source>
    </source>
</evidence>
<evidence type="ECO:0000269" key="11">
    <source>
    </source>
</evidence>
<evidence type="ECO:0000303" key="12">
    <source>
    </source>
</evidence>
<evidence type="ECO:0000303" key="13">
    <source>
    </source>
</evidence>
<evidence type="ECO:0000305" key="14"/>
<evidence type="ECO:0000312" key="15">
    <source>
        <dbReference type="EMBL" id="AAF07876.1"/>
    </source>
</evidence>
<evidence type="ECO:0000312" key="16">
    <source>
        <dbReference type="EMBL" id="AAF07879.1"/>
    </source>
</evidence>
<evidence type="ECO:0000312" key="17">
    <source>
        <dbReference type="EMBL" id="AAL48427.1"/>
    </source>
</evidence>
<evidence type="ECO:0000312" key="18">
    <source>
        <dbReference type="FlyBase" id="FBgn0015221"/>
    </source>
</evidence>
<evidence type="ECO:0000312" key="19">
    <source>
        <dbReference type="Proteomes" id="UP000000803"/>
    </source>
</evidence>
<proteinExistence type="evidence at protein level"/>